<reference key="1">
    <citation type="journal article" date="2006" name="Genome Res.">
        <title>Massive genome erosion and functional adaptations provide insights into the symbiotic lifestyle of Sodalis glossinidius in the tsetse host.</title>
        <authorList>
            <person name="Toh H."/>
            <person name="Weiss B.L."/>
            <person name="Perkin S.A.H."/>
            <person name="Yamashita A."/>
            <person name="Oshima K."/>
            <person name="Hattori M."/>
            <person name="Aksoy S."/>
        </authorList>
    </citation>
    <scope>NUCLEOTIDE SEQUENCE [LARGE SCALE GENOMIC DNA]</scope>
    <source>
        <strain>morsitans</strain>
    </source>
</reference>
<sequence length="473" mass="52969">MKIKTRFAPSPTGYLHVGGARTALYSWLFARHLGGEFLLRIEDTDLERSTQPAIDAIMDGMNWLNLDWDEGPYFQTKRFDRYNAVIDDMLSKGTAYHCYCSKERLETLREAQMARGEKPRYDGRCRDSHEHHADDEPCVVRFRNPQDGSVVFNDLIRGPIEFSNQELDDLIIRRIDGSPTYNFCVVVDDFDMAITHVIRGEDHINNTPRQINILKALGAPVPAYAHVSMILGDDGKKLSKRHGAVGVMQYRDDGFLPEALLNYLVRLGWSHGDQEIFSVDEMKQLFSFEAVSKSASAFNTEKLLWLNHHYINHLPADYVATHLVLHIEQQGIDTRTGPQLAALVKLLGERCKTLKEIAASCRYFYEDFSEFDADAAKKHLRPVAVLALEAVRANLAALSEWTPATVHAAIEQTAEALQVGMGKVGMPLRVAVTGTGQSPALDVTVHAIGQSRCLARIVKALDFIACRTQESAG</sequence>
<comment type="function">
    <text evidence="1">Catalyzes the attachment of glutamate to tRNA(Glu) in a two-step reaction: glutamate is first activated by ATP to form Glu-AMP and then transferred to the acceptor end of tRNA(Glu).</text>
</comment>
<comment type="catalytic activity">
    <reaction evidence="1">
        <text>tRNA(Glu) + L-glutamate + ATP = L-glutamyl-tRNA(Glu) + AMP + diphosphate</text>
        <dbReference type="Rhea" id="RHEA:23540"/>
        <dbReference type="Rhea" id="RHEA-COMP:9663"/>
        <dbReference type="Rhea" id="RHEA-COMP:9680"/>
        <dbReference type="ChEBI" id="CHEBI:29985"/>
        <dbReference type="ChEBI" id="CHEBI:30616"/>
        <dbReference type="ChEBI" id="CHEBI:33019"/>
        <dbReference type="ChEBI" id="CHEBI:78442"/>
        <dbReference type="ChEBI" id="CHEBI:78520"/>
        <dbReference type="ChEBI" id="CHEBI:456215"/>
        <dbReference type="EC" id="6.1.1.17"/>
    </reaction>
</comment>
<comment type="cofactor">
    <cofactor evidence="1">
        <name>Zn(2+)</name>
        <dbReference type="ChEBI" id="CHEBI:29105"/>
    </cofactor>
    <text evidence="1">Binds 1 zinc ion per subunit.</text>
</comment>
<comment type="subunit">
    <text evidence="1">Monomer.</text>
</comment>
<comment type="subcellular location">
    <subcellularLocation>
        <location evidence="1">Cytoplasm</location>
    </subcellularLocation>
</comment>
<comment type="similarity">
    <text evidence="1">Belongs to the class-I aminoacyl-tRNA synthetase family. Glutamate--tRNA ligase type 1 subfamily.</text>
</comment>
<feature type="chain" id="PRO_0000237402" description="Glutamate--tRNA ligase">
    <location>
        <begin position="1"/>
        <end position="473"/>
    </location>
</feature>
<feature type="short sequence motif" description="'HIGH' region" evidence="1">
    <location>
        <begin position="9"/>
        <end position="19"/>
    </location>
</feature>
<feature type="short sequence motif" description="'KMSKS' region" evidence="1">
    <location>
        <begin position="237"/>
        <end position="241"/>
    </location>
</feature>
<feature type="binding site" evidence="1">
    <location>
        <position position="98"/>
    </location>
    <ligand>
        <name>Zn(2+)</name>
        <dbReference type="ChEBI" id="CHEBI:29105"/>
    </ligand>
</feature>
<feature type="binding site" evidence="1">
    <location>
        <position position="100"/>
    </location>
    <ligand>
        <name>Zn(2+)</name>
        <dbReference type="ChEBI" id="CHEBI:29105"/>
    </ligand>
</feature>
<feature type="binding site" evidence="1">
    <location>
        <position position="125"/>
    </location>
    <ligand>
        <name>Zn(2+)</name>
        <dbReference type="ChEBI" id="CHEBI:29105"/>
    </ligand>
</feature>
<feature type="binding site" evidence="1">
    <location>
        <position position="127"/>
    </location>
    <ligand>
        <name>Zn(2+)</name>
        <dbReference type="ChEBI" id="CHEBI:29105"/>
    </ligand>
</feature>
<feature type="binding site" evidence="1">
    <location>
        <position position="240"/>
    </location>
    <ligand>
        <name>ATP</name>
        <dbReference type="ChEBI" id="CHEBI:30616"/>
    </ligand>
</feature>
<accession>Q2NSC4</accession>
<keyword id="KW-0030">Aminoacyl-tRNA synthetase</keyword>
<keyword id="KW-0067">ATP-binding</keyword>
<keyword id="KW-0963">Cytoplasm</keyword>
<keyword id="KW-0436">Ligase</keyword>
<keyword id="KW-0479">Metal-binding</keyword>
<keyword id="KW-0547">Nucleotide-binding</keyword>
<keyword id="KW-0648">Protein biosynthesis</keyword>
<keyword id="KW-0862">Zinc</keyword>
<protein>
    <recommendedName>
        <fullName evidence="1">Glutamate--tRNA ligase</fullName>
        <ecNumber evidence="1">6.1.1.17</ecNumber>
    </recommendedName>
    <alternativeName>
        <fullName evidence="1">Glutamyl-tRNA synthetase</fullName>
        <shortName evidence="1">GluRS</shortName>
    </alternativeName>
</protein>
<dbReference type="EC" id="6.1.1.17" evidence="1"/>
<dbReference type="EMBL" id="AP008232">
    <property type="protein sequence ID" value="BAE74951.1"/>
    <property type="molecule type" value="Genomic_DNA"/>
</dbReference>
<dbReference type="RefSeq" id="WP_011411501.1">
    <property type="nucleotide sequence ID" value="NC_007712.1"/>
</dbReference>
<dbReference type="SMR" id="Q2NSC4"/>
<dbReference type="STRING" id="343509.SG1676"/>
<dbReference type="KEGG" id="sgl:SG1676"/>
<dbReference type="eggNOG" id="COG0008">
    <property type="taxonomic scope" value="Bacteria"/>
</dbReference>
<dbReference type="HOGENOM" id="CLU_015768_6_0_6"/>
<dbReference type="OrthoDB" id="9807503at2"/>
<dbReference type="BioCyc" id="SGLO343509:SGP1_RS15195-MONOMER"/>
<dbReference type="Proteomes" id="UP000001932">
    <property type="component" value="Chromosome"/>
</dbReference>
<dbReference type="GO" id="GO:0005829">
    <property type="term" value="C:cytosol"/>
    <property type="evidence" value="ECO:0007669"/>
    <property type="project" value="TreeGrafter"/>
</dbReference>
<dbReference type="GO" id="GO:0005524">
    <property type="term" value="F:ATP binding"/>
    <property type="evidence" value="ECO:0007669"/>
    <property type="project" value="UniProtKB-UniRule"/>
</dbReference>
<dbReference type="GO" id="GO:0004818">
    <property type="term" value="F:glutamate-tRNA ligase activity"/>
    <property type="evidence" value="ECO:0007669"/>
    <property type="project" value="UniProtKB-UniRule"/>
</dbReference>
<dbReference type="GO" id="GO:0000049">
    <property type="term" value="F:tRNA binding"/>
    <property type="evidence" value="ECO:0007669"/>
    <property type="project" value="InterPro"/>
</dbReference>
<dbReference type="GO" id="GO:0008270">
    <property type="term" value="F:zinc ion binding"/>
    <property type="evidence" value="ECO:0007669"/>
    <property type="project" value="UniProtKB-UniRule"/>
</dbReference>
<dbReference type="GO" id="GO:0006424">
    <property type="term" value="P:glutamyl-tRNA aminoacylation"/>
    <property type="evidence" value="ECO:0007669"/>
    <property type="project" value="UniProtKB-UniRule"/>
</dbReference>
<dbReference type="CDD" id="cd00808">
    <property type="entry name" value="GluRS_core"/>
    <property type="match status" value="1"/>
</dbReference>
<dbReference type="FunFam" id="3.40.50.620:FF:000007">
    <property type="entry name" value="Glutamate--tRNA ligase"/>
    <property type="match status" value="1"/>
</dbReference>
<dbReference type="Gene3D" id="1.10.10.350">
    <property type="match status" value="1"/>
</dbReference>
<dbReference type="Gene3D" id="3.40.50.620">
    <property type="entry name" value="HUPs"/>
    <property type="match status" value="1"/>
</dbReference>
<dbReference type="HAMAP" id="MF_00022">
    <property type="entry name" value="Glu_tRNA_synth_type1"/>
    <property type="match status" value="1"/>
</dbReference>
<dbReference type="InterPro" id="IPR045462">
    <property type="entry name" value="aa-tRNA-synth_I_cd-bd"/>
</dbReference>
<dbReference type="InterPro" id="IPR020751">
    <property type="entry name" value="aa-tRNA-synth_I_codon-bd_sub2"/>
</dbReference>
<dbReference type="InterPro" id="IPR001412">
    <property type="entry name" value="aa-tRNA-synth_I_CS"/>
</dbReference>
<dbReference type="InterPro" id="IPR008925">
    <property type="entry name" value="aa_tRNA-synth_I_cd-bd_sf"/>
</dbReference>
<dbReference type="InterPro" id="IPR004527">
    <property type="entry name" value="Glu-tRNA-ligase_bac/mito"/>
</dbReference>
<dbReference type="InterPro" id="IPR000924">
    <property type="entry name" value="Glu/Gln-tRNA-synth"/>
</dbReference>
<dbReference type="InterPro" id="IPR020058">
    <property type="entry name" value="Glu/Gln-tRNA-synth_Ib_cat-dom"/>
</dbReference>
<dbReference type="InterPro" id="IPR049940">
    <property type="entry name" value="GluQ/Sye"/>
</dbReference>
<dbReference type="InterPro" id="IPR033910">
    <property type="entry name" value="GluRS_core"/>
</dbReference>
<dbReference type="InterPro" id="IPR014729">
    <property type="entry name" value="Rossmann-like_a/b/a_fold"/>
</dbReference>
<dbReference type="NCBIfam" id="TIGR00464">
    <property type="entry name" value="gltX_bact"/>
    <property type="match status" value="1"/>
</dbReference>
<dbReference type="PANTHER" id="PTHR43311">
    <property type="entry name" value="GLUTAMATE--TRNA LIGASE"/>
    <property type="match status" value="1"/>
</dbReference>
<dbReference type="PANTHER" id="PTHR43311:SF2">
    <property type="entry name" value="GLUTAMATE--TRNA LIGASE, MITOCHONDRIAL-RELATED"/>
    <property type="match status" value="1"/>
</dbReference>
<dbReference type="Pfam" id="PF19269">
    <property type="entry name" value="Anticodon_2"/>
    <property type="match status" value="1"/>
</dbReference>
<dbReference type="Pfam" id="PF00749">
    <property type="entry name" value="tRNA-synt_1c"/>
    <property type="match status" value="1"/>
</dbReference>
<dbReference type="PRINTS" id="PR00987">
    <property type="entry name" value="TRNASYNTHGLU"/>
</dbReference>
<dbReference type="SUPFAM" id="SSF48163">
    <property type="entry name" value="An anticodon-binding domain of class I aminoacyl-tRNA synthetases"/>
    <property type="match status" value="1"/>
</dbReference>
<dbReference type="SUPFAM" id="SSF52374">
    <property type="entry name" value="Nucleotidylyl transferase"/>
    <property type="match status" value="1"/>
</dbReference>
<dbReference type="PROSITE" id="PS00178">
    <property type="entry name" value="AA_TRNA_LIGASE_I"/>
    <property type="match status" value="1"/>
</dbReference>
<gene>
    <name evidence="1" type="primary">gltX</name>
    <name type="ordered locus">SG1676</name>
</gene>
<organism>
    <name type="scientific">Sodalis glossinidius (strain morsitans)</name>
    <dbReference type="NCBI Taxonomy" id="343509"/>
    <lineage>
        <taxon>Bacteria</taxon>
        <taxon>Pseudomonadati</taxon>
        <taxon>Pseudomonadota</taxon>
        <taxon>Gammaproteobacteria</taxon>
        <taxon>Enterobacterales</taxon>
        <taxon>Bruguierivoracaceae</taxon>
        <taxon>Sodalis</taxon>
    </lineage>
</organism>
<name>SYE_SODGM</name>
<proteinExistence type="inferred from homology"/>
<evidence type="ECO:0000255" key="1">
    <source>
        <dbReference type="HAMAP-Rule" id="MF_00022"/>
    </source>
</evidence>